<organism>
    <name type="scientific">Mycolicibacterium paratuberculosis (strain ATCC BAA-968 / K-10)</name>
    <name type="common">Mycobacterium paratuberculosis</name>
    <dbReference type="NCBI Taxonomy" id="262316"/>
    <lineage>
        <taxon>Bacteria</taxon>
        <taxon>Bacillati</taxon>
        <taxon>Actinomycetota</taxon>
        <taxon>Actinomycetes</taxon>
        <taxon>Mycobacteriales</taxon>
        <taxon>Mycobacteriaceae</taxon>
        <taxon>Mycobacterium</taxon>
        <taxon>Mycobacterium avium complex (MAC)</taxon>
    </lineage>
</organism>
<sequence>MAEYTLPDLDWDYAALEPHISGQINEIHHTKHHATYVKGVNDALAKLEEARANEDHAAIFLNEKNLAFHLGGHVNHSIWWKNLSPDGGDKPTGELAAAIDDAFGSFDKFRAQFSAAANGLQGSGWAVLGYDTVGSRLLTFQLYDQQANVPLGIIPLLQVDMWEHAFYLQYKNVKADYVKAFWNVVNWADVQKRYAAATSKAQGLIFG</sequence>
<keyword id="KW-0903">Direct protein sequencing</keyword>
<keyword id="KW-0464">Manganese</keyword>
<keyword id="KW-0479">Metal-binding</keyword>
<keyword id="KW-0560">Oxidoreductase</keyword>
<keyword id="KW-1185">Reference proteome</keyword>
<keyword id="KW-0964">Secreted</keyword>
<name>SODM_MYCPA</name>
<protein>
    <recommendedName>
        <fullName>Superoxide dismutase [Mn]</fullName>
        <ecNumber>1.15.1.1</ecNumber>
    </recommendedName>
</protein>
<dbReference type="EC" id="1.15.1.1"/>
<dbReference type="EMBL" id="AF180816">
    <property type="protein sequence ID" value="AAG09425.1"/>
    <property type="molecule type" value="Genomic_DNA"/>
</dbReference>
<dbReference type="EMBL" id="AF333434">
    <property type="protein sequence ID" value="AAG50084.2"/>
    <property type="molecule type" value="Genomic_DNA"/>
</dbReference>
<dbReference type="EMBL" id="AE016958">
    <property type="protein sequence ID" value="AAS02504.1"/>
    <property type="molecule type" value="Genomic_DNA"/>
</dbReference>
<dbReference type="EMBL" id="Z48212">
    <property type="protein sequence ID" value="CAA88245.1"/>
    <property type="molecule type" value="Genomic_DNA"/>
</dbReference>
<dbReference type="PIR" id="S52370">
    <property type="entry name" value="S52370"/>
</dbReference>
<dbReference type="RefSeq" id="WP_010948769.1">
    <property type="nucleotide sequence ID" value="NZ_CP106873.1"/>
</dbReference>
<dbReference type="SMR" id="P53647"/>
<dbReference type="STRING" id="262316.MAP_0187c"/>
<dbReference type="MoonProt" id="P53647"/>
<dbReference type="KEGG" id="mpa:MAP_0187c"/>
<dbReference type="PATRIC" id="fig|262316.17.peg.196"/>
<dbReference type="eggNOG" id="COG0605">
    <property type="taxonomic scope" value="Bacteria"/>
</dbReference>
<dbReference type="HOGENOM" id="CLU_031625_2_2_11"/>
<dbReference type="Proteomes" id="UP000000580">
    <property type="component" value="Chromosome"/>
</dbReference>
<dbReference type="GO" id="GO:0005576">
    <property type="term" value="C:extracellular region"/>
    <property type="evidence" value="ECO:0007669"/>
    <property type="project" value="UniProtKB-SubCell"/>
</dbReference>
<dbReference type="GO" id="GO:0046872">
    <property type="term" value="F:metal ion binding"/>
    <property type="evidence" value="ECO:0007669"/>
    <property type="project" value="UniProtKB-KW"/>
</dbReference>
<dbReference type="GO" id="GO:0004784">
    <property type="term" value="F:superoxide dismutase activity"/>
    <property type="evidence" value="ECO:0007669"/>
    <property type="project" value="UniProtKB-EC"/>
</dbReference>
<dbReference type="FunFam" id="1.10.287.990:FF:000001">
    <property type="entry name" value="Superoxide dismutase"/>
    <property type="match status" value="1"/>
</dbReference>
<dbReference type="FunFam" id="3.55.40.20:FF:000004">
    <property type="entry name" value="Superoxide dismutase [Fe]"/>
    <property type="match status" value="1"/>
</dbReference>
<dbReference type="Gene3D" id="1.10.287.990">
    <property type="entry name" value="Fe,Mn superoxide dismutase (SOD) domain"/>
    <property type="match status" value="1"/>
</dbReference>
<dbReference type="Gene3D" id="3.55.40.20">
    <property type="entry name" value="Iron/manganese superoxide dismutase, C-terminal domain"/>
    <property type="match status" value="1"/>
</dbReference>
<dbReference type="InterPro" id="IPR050265">
    <property type="entry name" value="Fe/Mn_Superoxide_Dismutase"/>
</dbReference>
<dbReference type="InterPro" id="IPR001189">
    <property type="entry name" value="Mn/Fe_SOD"/>
</dbReference>
<dbReference type="InterPro" id="IPR019833">
    <property type="entry name" value="Mn/Fe_SOD_BS"/>
</dbReference>
<dbReference type="InterPro" id="IPR019832">
    <property type="entry name" value="Mn/Fe_SOD_C"/>
</dbReference>
<dbReference type="InterPro" id="IPR019831">
    <property type="entry name" value="Mn/Fe_SOD_N"/>
</dbReference>
<dbReference type="InterPro" id="IPR036324">
    <property type="entry name" value="Mn/Fe_SOD_N_sf"/>
</dbReference>
<dbReference type="InterPro" id="IPR036314">
    <property type="entry name" value="SOD_C_sf"/>
</dbReference>
<dbReference type="PANTHER" id="PTHR11404">
    <property type="entry name" value="SUPEROXIDE DISMUTASE 2"/>
    <property type="match status" value="1"/>
</dbReference>
<dbReference type="PANTHER" id="PTHR11404:SF6">
    <property type="entry name" value="SUPEROXIDE DISMUTASE [MN], MITOCHONDRIAL"/>
    <property type="match status" value="1"/>
</dbReference>
<dbReference type="Pfam" id="PF02777">
    <property type="entry name" value="Sod_Fe_C"/>
    <property type="match status" value="1"/>
</dbReference>
<dbReference type="Pfam" id="PF00081">
    <property type="entry name" value="Sod_Fe_N"/>
    <property type="match status" value="1"/>
</dbReference>
<dbReference type="PIRSF" id="PIRSF000349">
    <property type="entry name" value="SODismutase"/>
    <property type="match status" value="1"/>
</dbReference>
<dbReference type="PRINTS" id="PR01703">
    <property type="entry name" value="MNSODISMTASE"/>
</dbReference>
<dbReference type="SUPFAM" id="SSF54719">
    <property type="entry name" value="Fe,Mn superoxide dismutase (SOD), C-terminal domain"/>
    <property type="match status" value="1"/>
</dbReference>
<dbReference type="SUPFAM" id="SSF46609">
    <property type="entry name" value="Fe,Mn superoxide dismutase (SOD), N-terminal domain"/>
    <property type="match status" value="1"/>
</dbReference>
<dbReference type="PROSITE" id="PS00088">
    <property type="entry name" value="SOD_MN"/>
    <property type="match status" value="1"/>
</dbReference>
<reference key="1">
    <citation type="journal article" date="2001" name="FEMS Microbiol. Lett.">
        <title>Identification of a secreted superoxide dismutase in Mycobacterium avium ssp. paratuberculosis.</title>
        <authorList>
            <person name="Liu X."/>
            <person name="Feng Z."/>
            <person name="Harris N.B."/>
            <person name="Cirillo J.D."/>
            <person name="Bercovier H."/>
            <person name="Barletta R.G."/>
        </authorList>
    </citation>
    <scope>NUCLEOTIDE SEQUENCE [GENOMIC DNA]</scope>
    <scope>PROTEIN SEQUENCE OF 2-11</scope>
    <scope>SUBCELLULAR LOCATION</scope>
    <source>
        <strain>ATCC BAA-968 / K-10</strain>
    </source>
</reference>
<reference key="2">
    <citation type="submission" date="2002-08" db="EMBL/GenBank/DDBJ databases">
        <authorList>
            <person name="Shin S.J."/>
            <person name="Dheenadhayalan V."/>
            <person name="Chang Y.F."/>
        </authorList>
    </citation>
    <scope>NUCLEOTIDE SEQUENCE [GENOMIC DNA]</scope>
</reference>
<reference key="3">
    <citation type="journal article" date="2005" name="Proc. Natl. Acad. Sci. U.S.A.">
        <title>The complete genome sequence of Mycobacterium avium subspecies paratuberculosis.</title>
        <authorList>
            <person name="Li L."/>
            <person name="Bannantine J.P."/>
            <person name="Zhang Q."/>
            <person name="Amonsin A."/>
            <person name="May B.J."/>
            <person name="Alt D."/>
            <person name="Banerji N."/>
            <person name="Kanjilal S."/>
            <person name="Kapur V."/>
        </authorList>
    </citation>
    <scope>NUCLEOTIDE SEQUENCE [LARGE SCALE GENOMIC DNA]</scope>
    <source>
        <strain>ATCC BAA-968 / K-10</strain>
    </source>
</reference>
<reference key="4">
    <citation type="journal article" date="1995" name="Clin. Mol. Pathol.">
        <title>Rapid identification of mycobacteria from AIDS patients by capillary electrophoretic profiling of amplified SOD gene.</title>
        <authorList>
            <person name="Bull T.J."/>
            <person name="Shanson D.C."/>
            <person name="Archard L.C."/>
        </authorList>
    </citation>
    <scope>NUCLEOTIDE SEQUENCE [GENOMIC DNA] OF 28-165</scope>
    <source>
        <strain>ATCC 19851 / CIP 103964 / NCTC 8578 / JC31</strain>
    </source>
</reference>
<accession>P53647</accession>
<accession>Q9AM00</accession>
<accession>Q9F9R1</accession>
<evidence type="ECO:0000250" key="1"/>
<evidence type="ECO:0000269" key="2">
    <source>
    </source>
</evidence>
<evidence type="ECO:0000305" key="3"/>
<proteinExistence type="evidence at protein level"/>
<comment type="function">
    <text>Destroys superoxide anion radicals which are normally produced within the cells and which are toxic to biological systems.</text>
</comment>
<comment type="catalytic activity">
    <reaction>
        <text>2 superoxide + 2 H(+) = H2O2 + O2</text>
        <dbReference type="Rhea" id="RHEA:20696"/>
        <dbReference type="ChEBI" id="CHEBI:15378"/>
        <dbReference type="ChEBI" id="CHEBI:15379"/>
        <dbReference type="ChEBI" id="CHEBI:16240"/>
        <dbReference type="ChEBI" id="CHEBI:18421"/>
        <dbReference type="EC" id="1.15.1.1"/>
    </reaction>
</comment>
<comment type="cofactor">
    <cofactor evidence="1">
        <name>Mn(2+)</name>
        <dbReference type="ChEBI" id="CHEBI:29035"/>
    </cofactor>
    <text evidence="1">Binds 1 Mn(2+) ion per subunit.</text>
</comment>
<comment type="subcellular location">
    <subcellularLocation>
        <location evidence="2">Secreted</location>
    </subcellularLocation>
</comment>
<comment type="similarity">
    <text evidence="3">Belongs to the iron/manganese superoxide dismutase family.</text>
</comment>
<gene>
    <name type="primary">sodA</name>
    <name type="synonym">sod</name>
    <name type="ordered locus">MAP_0187c</name>
</gene>
<feature type="initiator methionine" description="Removed" evidence="2">
    <location>
        <position position="1"/>
    </location>
</feature>
<feature type="chain" id="PRO_0000160056" description="Superoxide dismutase [Mn]">
    <location>
        <begin position="2"/>
        <end position="207"/>
    </location>
</feature>
<feature type="binding site" evidence="1">
    <location>
        <position position="28"/>
    </location>
    <ligand>
        <name>Mn(2+)</name>
        <dbReference type="ChEBI" id="CHEBI:29035"/>
    </ligand>
</feature>
<feature type="binding site" evidence="1">
    <location>
        <position position="76"/>
    </location>
    <ligand>
        <name>Mn(2+)</name>
        <dbReference type="ChEBI" id="CHEBI:29035"/>
    </ligand>
</feature>
<feature type="binding site" evidence="1">
    <location>
        <position position="160"/>
    </location>
    <ligand>
        <name>Mn(2+)</name>
        <dbReference type="ChEBI" id="CHEBI:29035"/>
    </ligand>
</feature>
<feature type="binding site" evidence="1">
    <location>
        <position position="164"/>
    </location>
    <ligand>
        <name>Mn(2+)</name>
        <dbReference type="ChEBI" id="CHEBI:29035"/>
    </ligand>
</feature>